<reference key="1">
    <citation type="submission" date="2006-03" db="EMBL/GenBank/DDBJ databases">
        <title>Complete sequence of Methylobacillus flagellatus KT.</title>
        <authorList>
            <consortium name="US DOE Joint Genome Institute"/>
            <person name="Copeland A."/>
            <person name="Lucas S."/>
            <person name="Lapidus A."/>
            <person name="Barry K."/>
            <person name="Detter J.C."/>
            <person name="Glavina del Rio T."/>
            <person name="Hammon N."/>
            <person name="Israni S."/>
            <person name="Dalin E."/>
            <person name="Tice H."/>
            <person name="Pitluck S."/>
            <person name="Brettin T."/>
            <person name="Bruce D."/>
            <person name="Han C."/>
            <person name="Tapia R."/>
            <person name="Saunders E."/>
            <person name="Gilna P."/>
            <person name="Schmutz J."/>
            <person name="Larimer F."/>
            <person name="Land M."/>
            <person name="Kyrpides N."/>
            <person name="Anderson I."/>
            <person name="Richardson P."/>
        </authorList>
    </citation>
    <scope>NUCLEOTIDE SEQUENCE [LARGE SCALE GENOMIC DNA]</scope>
    <source>
        <strain>ATCC 51484 / DSM 6875 / VKM B-1610 / KT</strain>
    </source>
</reference>
<proteinExistence type="inferred from homology"/>
<name>MURC_METFK</name>
<organism>
    <name type="scientific">Methylobacillus flagellatus (strain ATCC 51484 / DSM 6875 / VKM B-1610 / KT)</name>
    <dbReference type="NCBI Taxonomy" id="265072"/>
    <lineage>
        <taxon>Bacteria</taxon>
        <taxon>Pseudomonadati</taxon>
        <taxon>Pseudomonadota</taxon>
        <taxon>Betaproteobacteria</taxon>
        <taxon>Nitrosomonadales</taxon>
        <taxon>Methylophilaceae</taxon>
        <taxon>Methylobacillus</taxon>
    </lineage>
</organism>
<comment type="function">
    <text evidence="1">Cell wall formation.</text>
</comment>
<comment type="catalytic activity">
    <reaction evidence="1">
        <text>UDP-N-acetyl-alpha-D-muramate + L-alanine + ATP = UDP-N-acetyl-alpha-D-muramoyl-L-alanine + ADP + phosphate + H(+)</text>
        <dbReference type="Rhea" id="RHEA:23372"/>
        <dbReference type="ChEBI" id="CHEBI:15378"/>
        <dbReference type="ChEBI" id="CHEBI:30616"/>
        <dbReference type="ChEBI" id="CHEBI:43474"/>
        <dbReference type="ChEBI" id="CHEBI:57972"/>
        <dbReference type="ChEBI" id="CHEBI:70757"/>
        <dbReference type="ChEBI" id="CHEBI:83898"/>
        <dbReference type="ChEBI" id="CHEBI:456216"/>
        <dbReference type="EC" id="6.3.2.8"/>
    </reaction>
</comment>
<comment type="pathway">
    <text evidence="1">Cell wall biogenesis; peptidoglycan biosynthesis.</text>
</comment>
<comment type="subcellular location">
    <subcellularLocation>
        <location evidence="1">Cytoplasm</location>
    </subcellularLocation>
</comment>
<comment type="similarity">
    <text evidence="1">Belongs to the MurCDEF family.</text>
</comment>
<evidence type="ECO:0000255" key="1">
    <source>
        <dbReference type="HAMAP-Rule" id="MF_00046"/>
    </source>
</evidence>
<keyword id="KW-0067">ATP-binding</keyword>
<keyword id="KW-0131">Cell cycle</keyword>
<keyword id="KW-0132">Cell division</keyword>
<keyword id="KW-0133">Cell shape</keyword>
<keyword id="KW-0961">Cell wall biogenesis/degradation</keyword>
<keyword id="KW-0963">Cytoplasm</keyword>
<keyword id="KW-0436">Ligase</keyword>
<keyword id="KW-0547">Nucleotide-binding</keyword>
<keyword id="KW-0573">Peptidoglycan synthesis</keyword>
<keyword id="KW-1185">Reference proteome</keyword>
<protein>
    <recommendedName>
        <fullName evidence="1">UDP-N-acetylmuramate--L-alanine ligase</fullName>
        <ecNumber evidence="1">6.3.2.8</ecNumber>
    </recommendedName>
    <alternativeName>
        <fullName evidence="1">UDP-N-acetylmuramoyl-L-alanine synthetase</fullName>
    </alternativeName>
</protein>
<gene>
    <name evidence="1" type="primary">murC</name>
    <name type="ordered locus">Mfla_2268</name>
</gene>
<feature type="chain" id="PRO_1000004368" description="UDP-N-acetylmuramate--L-alanine ligase">
    <location>
        <begin position="1"/>
        <end position="475"/>
    </location>
</feature>
<feature type="binding site" evidence="1">
    <location>
        <begin position="112"/>
        <end position="118"/>
    </location>
    <ligand>
        <name>ATP</name>
        <dbReference type="ChEBI" id="CHEBI:30616"/>
    </ligand>
</feature>
<sequence length="475" mass="51117">MKHKVKHVHFVGIGGSGMSGIAEVLLNLGFSVSGSDLADNATTRRLAGFGAKLYQGHAAEHLGESDVVVISSAVKDDNPEVVAARERNIPIIPRALMLAELMRFRQGIAIAGTHGKTTTTSLIASILAEAGMDPTFVIGGRLEASGSNARLGTGEYIVAEADESDASFLHLTPIISVVTNIDADHMDTYGHDFERLKGAFVEFLQRLPFYGMAVVCIDDPNVRAILPQISKQVMPYGFSEEARIRASNVQAENGRMHFTVTRINGVTTTFDVTLNLPGRHYVLNALAAIAVASELNVPDGAIIKALAEFKGVGRRFERYGEVPARDGGYFTLVDDYGHHPAEMNAVIAAARDAFPGRRLVLAFQPHRYTRTRDCFEDFVKVLSSADVVLLTEVYAAGEAPIVAADGRSLVRAIRVAGKVEPLFVETPQELPQSILDMAQDGDVVIVMGAGSIGQVAARTKEMAEVAEHVPMEAVR</sequence>
<accession>Q1GZ02</accession>
<dbReference type="EC" id="6.3.2.8" evidence="1"/>
<dbReference type="EMBL" id="CP000284">
    <property type="protein sequence ID" value="ABE50535.1"/>
    <property type="molecule type" value="Genomic_DNA"/>
</dbReference>
<dbReference type="RefSeq" id="WP_011480489.1">
    <property type="nucleotide sequence ID" value="NC_007947.1"/>
</dbReference>
<dbReference type="SMR" id="Q1GZ02"/>
<dbReference type="STRING" id="265072.Mfla_2268"/>
<dbReference type="KEGG" id="mfa:Mfla_2268"/>
<dbReference type="eggNOG" id="COG0773">
    <property type="taxonomic scope" value="Bacteria"/>
</dbReference>
<dbReference type="HOGENOM" id="CLU_028104_2_2_4"/>
<dbReference type="OrthoDB" id="9804126at2"/>
<dbReference type="UniPathway" id="UPA00219"/>
<dbReference type="Proteomes" id="UP000002440">
    <property type="component" value="Chromosome"/>
</dbReference>
<dbReference type="GO" id="GO:0005737">
    <property type="term" value="C:cytoplasm"/>
    <property type="evidence" value="ECO:0007669"/>
    <property type="project" value="UniProtKB-SubCell"/>
</dbReference>
<dbReference type="GO" id="GO:0005524">
    <property type="term" value="F:ATP binding"/>
    <property type="evidence" value="ECO:0007669"/>
    <property type="project" value="UniProtKB-UniRule"/>
</dbReference>
<dbReference type="GO" id="GO:0008763">
    <property type="term" value="F:UDP-N-acetylmuramate-L-alanine ligase activity"/>
    <property type="evidence" value="ECO:0007669"/>
    <property type="project" value="UniProtKB-UniRule"/>
</dbReference>
<dbReference type="GO" id="GO:0051301">
    <property type="term" value="P:cell division"/>
    <property type="evidence" value="ECO:0007669"/>
    <property type="project" value="UniProtKB-KW"/>
</dbReference>
<dbReference type="GO" id="GO:0071555">
    <property type="term" value="P:cell wall organization"/>
    <property type="evidence" value="ECO:0007669"/>
    <property type="project" value="UniProtKB-KW"/>
</dbReference>
<dbReference type="GO" id="GO:0009252">
    <property type="term" value="P:peptidoglycan biosynthetic process"/>
    <property type="evidence" value="ECO:0007669"/>
    <property type="project" value="UniProtKB-UniRule"/>
</dbReference>
<dbReference type="GO" id="GO:0008360">
    <property type="term" value="P:regulation of cell shape"/>
    <property type="evidence" value="ECO:0007669"/>
    <property type="project" value="UniProtKB-KW"/>
</dbReference>
<dbReference type="FunFam" id="3.40.1190.10:FF:000001">
    <property type="entry name" value="UDP-N-acetylmuramate--L-alanine ligase"/>
    <property type="match status" value="1"/>
</dbReference>
<dbReference type="Gene3D" id="3.90.190.20">
    <property type="entry name" value="Mur ligase, C-terminal domain"/>
    <property type="match status" value="1"/>
</dbReference>
<dbReference type="Gene3D" id="3.40.1190.10">
    <property type="entry name" value="Mur-like, catalytic domain"/>
    <property type="match status" value="1"/>
</dbReference>
<dbReference type="Gene3D" id="3.40.50.720">
    <property type="entry name" value="NAD(P)-binding Rossmann-like Domain"/>
    <property type="match status" value="1"/>
</dbReference>
<dbReference type="HAMAP" id="MF_00046">
    <property type="entry name" value="MurC"/>
    <property type="match status" value="1"/>
</dbReference>
<dbReference type="InterPro" id="IPR036565">
    <property type="entry name" value="Mur-like_cat_sf"/>
</dbReference>
<dbReference type="InterPro" id="IPR004101">
    <property type="entry name" value="Mur_ligase_C"/>
</dbReference>
<dbReference type="InterPro" id="IPR036615">
    <property type="entry name" value="Mur_ligase_C_dom_sf"/>
</dbReference>
<dbReference type="InterPro" id="IPR013221">
    <property type="entry name" value="Mur_ligase_cen"/>
</dbReference>
<dbReference type="InterPro" id="IPR000713">
    <property type="entry name" value="Mur_ligase_N"/>
</dbReference>
<dbReference type="InterPro" id="IPR050061">
    <property type="entry name" value="MurCDEF_pg_biosynth"/>
</dbReference>
<dbReference type="InterPro" id="IPR005758">
    <property type="entry name" value="UDP-N-AcMur_Ala_ligase_MurC"/>
</dbReference>
<dbReference type="NCBIfam" id="TIGR01082">
    <property type="entry name" value="murC"/>
    <property type="match status" value="1"/>
</dbReference>
<dbReference type="PANTHER" id="PTHR43445:SF3">
    <property type="entry name" value="UDP-N-ACETYLMURAMATE--L-ALANINE LIGASE"/>
    <property type="match status" value="1"/>
</dbReference>
<dbReference type="PANTHER" id="PTHR43445">
    <property type="entry name" value="UDP-N-ACETYLMURAMATE--L-ALANINE LIGASE-RELATED"/>
    <property type="match status" value="1"/>
</dbReference>
<dbReference type="Pfam" id="PF01225">
    <property type="entry name" value="Mur_ligase"/>
    <property type="match status" value="1"/>
</dbReference>
<dbReference type="Pfam" id="PF02875">
    <property type="entry name" value="Mur_ligase_C"/>
    <property type="match status" value="1"/>
</dbReference>
<dbReference type="Pfam" id="PF08245">
    <property type="entry name" value="Mur_ligase_M"/>
    <property type="match status" value="1"/>
</dbReference>
<dbReference type="SUPFAM" id="SSF51984">
    <property type="entry name" value="MurCD N-terminal domain"/>
    <property type="match status" value="1"/>
</dbReference>
<dbReference type="SUPFAM" id="SSF53623">
    <property type="entry name" value="MurD-like peptide ligases, catalytic domain"/>
    <property type="match status" value="1"/>
</dbReference>
<dbReference type="SUPFAM" id="SSF53244">
    <property type="entry name" value="MurD-like peptide ligases, peptide-binding domain"/>
    <property type="match status" value="1"/>
</dbReference>